<gene>
    <name evidence="1" type="primary">kdsB</name>
    <name type="ordered locus">BTH_I0740</name>
</gene>
<comment type="function">
    <text evidence="1">Activates KDO (a required 8-carbon sugar) for incorporation into bacterial lipopolysaccharide in Gram-negative bacteria.</text>
</comment>
<comment type="catalytic activity">
    <reaction evidence="1">
        <text>3-deoxy-alpha-D-manno-oct-2-ulosonate + CTP = CMP-3-deoxy-beta-D-manno-octulosonate + diphosphate</text>
        <dbReference type="Rhea" id="RHEA:23448"/>
        <dbReference type="ChEBI" id="CHEBI:33019"/>
        <dbReference type="ChEBI" id="CHEBI:37563"/>
        <dbReference type="ChEBI" id="CHEBI:85986"/>
        <dbReference type="ChEBI" id="CHEBI:85987"/>
        <dbReference type="EC" id="2.7.7.38"/>
    </reaction>
</comment>
<comment type="pathway">
    <text evidence="1">Nucleotide-sugar biosynthesis; CMP-3-deoxy-D-manno-octulosonate biosynthesis; CMP-3-deoxy-D-manno-octulosonate from 3-deoxy-D-manno-octulosonate and CTP: step 1/1.</text>
</comment>
<comment type="pathway">
    <text evidence="1">Bacterial outer membrane biogenesis; lipopolysaccharide biosynthesis.</text>
</comment>
<comment type="subcellular location">
    <subcellularLocation>
        <location evidence="1">Cytoplasm</location>
    </subcellularLocation>
</comment>
<comment type="similarity">
    <text evidence="1">Belongs to the KdsB family.</text>
</comment>
<dbReference type="EC" id="2.7.7.38" evidence="1"/>
<dbReference type="EMBL" id="CP000086">
    <property type="protein sequence ID" value="ABC37461.1"/>
    <property type="molecule type" value="Genomic_DNA"/>
</dbReference>
<dbReference type="RefSeq" id="WP_009892653.1">
    <property type="nucleotide sequence ID" value="NZ_CP008785.1"/>
</dbReference>
<dbReference type="SMR" id="Q2T0K3"/>
<dbReference type="GeneID" id="45120497"/>
<dbReference type="KEGG" id="bte:BTH_I0740"/>
<dbReference type="HOGENOM" id="CLU_065038_1_0_4"/>
<dbReference type="UniPathway" id="UPA00030"/>
<dbReference type="UniPathway" id="UPA00358">
    <property type="reaction ID" value="UER00476"/>
</dbReference>
<dbReference type="Proteomes" id="UP000001930">
    <property type="component" value="Chromosome I"/>
</dbReference>
<dbReference type="GO" id="GO:0005829">
    <property type="term" value="C:cytosol"/>
    <property type="evidence" value="ECO:0007669"/>
    <property type="project" value="TreeGrafter"/>
</dbReference>
<dbReference type="GO" id="GO:0008690">
    <property type="term" value="F:3-deoxy-manno-octulosonate cytidylyltransferase activity"/>
    <property type="evidence" value="ECO:0007669"/>
    <property type="project" value="UniProtKB-UniRule"/>
</dbReference>
<dbReference type="GO" id="GO:0033468">
    <property type="term" value="P:CMP-keto-3-deoxy-D-manno-octulosonic acid biosynthetic process"/>
    <property type="evidence" value="ECO:0007669"/>
    <property type="project" value="UniProtKB-UniRule"/>
</dbReference>
<dbReference type="GO" id="GO:0009103">
    <property type="term" value="P:lipopolysaccharide biosynthetic process"/>
    <property type="evidence" value="ECO:0007669"/>
    <property type="project" value="UniProtKB-UniRule"/>
</dbReference>
<dbReference type="CDD" id="cd02517">
    <property type="entry name" value="CMP-KDO-Synthetase"/>
    <property type="match status" value="1"/>
</dbReference>
<dbReference type="FunFam" id="3.90.550.10:FF:000011">
    <property type="entry name" value="3-deoxy-manno-octulosonate cytidylyltransferase"/>
    <property type="match status" value="1"/>
</dbReference>
<dbReference type="Gene3D" id="3.90.550.10">
    <property type="entry name" value="Spore Coat Polysaccharide Biosynthesis Protein SpsA, Chain A"/>
    <property type="match status" value="1"/>
</dbReference>
<dbReference type="HAMAP" id="MF_00057">
    <property type="entry name" value="KdsB"/>
    <property type="match status" value="1"/>
</dbReference>
<dbReference type="InterPro" id="IPR003329">
    <property type="entry name" value="Cytidylyl_trans"/>
</dbReference>
<dbReference type="InterPro" id="IPR004528">
    <property type="entry name" value="KdsB"/>
</dbReference>
<dbReference type="InterPro" id="IPR029044">
    <property type="entry name" value="Nucleotide-diphossugar_trans"/>
</dbReference>
<dbReference type="NCBIfam" id="TIGR00466">
    <property type="entry name" value="kdsB"/>
    <property type="match status" value="1"/>
</dbReference>
<dbReference type="NCBIfam" id="NF003950">
    <property type="entry name" value="PRK05450.1-3"/>
    <property type="match status" value="1"/>
</dbReference>
<dbReference type="NCBIfam" id="NF003952">
    <property type="entry name" value="PRK05450.1-5"/>
    <property type="match status" value="1"/>
</dbReference>
<dbReference type="NCBIfam" id="NF009905">
    <property type="entry name" value="PRK13368.1"/>
    <property type="match status" value="1"/>
</dbReference>
<dbReference type="PANTHER" id="PTHR42866">
    <property type="entry name" value="3-DEOXY-MANNO-OCTULOSONATE CYTIDYLYLTRANSFERASE"/>
    <property type="match status" value="1"/>
</dbReference>
<dbReference type="PANTHER" id="PTHR42866:SF2">
    <property type="entry name" value="3-DEOXY-MANNO-OCTULOSONATE CYTIDYLYLTRANSFERASE, MITOCHONDRIAL"/>
    <property type="match status" value="1"/>
</dbReference>
<dbReference type="Pfam" id="PF02348">
    <property type="entry name" value="CTP_transf_3"/>
    <property type="match status" value="1"/>
</dbReference>
<dbReference type="SUPFAM" id="SSF53448">
    <property type="entry name" value="Nucleotide-diphospho-sugar transferases"/>
    <property type="match status" value="1"/>
</dbReference>
<sequence length="263" mass="28556">MTSPLPFVAVVPARLASTRLPNKPLADLGGKPMVVRVAERAREAGAQQVLVASDAQSVLDAVREHGFDAVLTRADHPSGTDRLAEVAAKLGFSDDTIVVNVQGDEPLIDPQLVCDVASHLAAHPSCAIATAAHPIHEAHEVFNPNYVKVVLDANGVALYFSRAPIPWSRDAYLPHWPNIAAMPAPTCPVYRHIGLYAYRARFLRTYPTLAQAPIEAAEQLEQLRAMWHGERIAVLVTEHAPEAGIDTPADLERVQALFRSRAK</sequence>
<organism>
    <name type="scientific">Burkholderia thailandensis (strain ATCC 700388 / DSM 13276 / CCUG 48851 / CIP 106301 / E264)</name>
    <dbReference type="NCBI Taxonomy" id="271848"/>
    <lineage>
        <taxon>Bacteria</taxon>
        <taxon>Pseudomonadati</taxon>
        <taxon>Pseudomonadota</taxon>
        <taxon>Betaproteobacteria</taxon>
        <taxon>Burkholderiales</taxon>
        <taxon>Burkholderiaceae</taxon>
        <taxon>Burkholderia</taxon>
        <taxon>pseudomallei group</taxon>
    </lineage>
</organism>
<proteinExistence type="inferred from homology"/>
<name>KDSB_BURTA</name>
<accession>Q2T0K3</accession>
<feature type="chain" id="PRO_0000370041" description="3-deoxy-manno-octulosonate cytidylyltransferase">
    <location>
        <begin position="1"/>
        <end position="263"/>
    </location>
</feature>
<reference key="1">
    <citation type="journal article" date="2005" name="BMC Genomics">
        <title>Bacterial genome adaptation to niches: divergence of the potential virulence genes in three Burkholderia species of different survival strategies.</title>
        <authorList>
            <person name="Kim H.S."/>
            <person name="Schell M.A."/>
            <person name="Yu Y."/>
            <person name="Ulrich R.L."/>
            <person name="Sarria S.H."/>
            <person name="Nierman W.C."/>
            <person name="DeShazer D."/>
        </authorList>
    </citation>
    <scope>NUCLEOTIDE SEQUENCE [LARGE SCALE GENOMIC DNA]</scope>
    <source>
        <strain>ATCC 700388 / DSM 13276 / CCUG 48851 / CIP 106301 / E264</strain>
    </source>
</reference>
<protein>
    <recommendedName>
        <fullName evidence="1">3-deoxy-manno-octulosonate cytidylyltransferase</fullName>
        <ecNumber evidence="1">2.7.7.38</ecNumber>
    </recommendedName>
    <alternativeName>
        <fullName evidence="1">CMP-2-keto-3-deoxyoctulosonic acid synthase</fullName>
        <shortName evidence="1">CKS</shortName>
        <shortName evidence="1">CMP-KDO synthase</shortName>
    </alternativeName>
</protein>
<evidence type="ECO:0000255" key="1">
    <source>
        <dbReference type="HAMAP-Rule" id="MF_00057"/>
    </source>
</evidence>
<keyword id="KW-0963">Cytoplasm</keyword>
<keyword id="KW-0448">Lipopolysaccharide biosynthesis</keyword>
<keyword id="KW-0548">Nucleotidyltransferase</keyword>
<keyword id="KW-0808">Transferase</keyword>